<dbReference type="EC" id="4.2.3.5" evidence="1"/>
<dbReference type="EMBL" id="AE017221">
    <property type="protein sequence ID" value="AAS81360.1"/>
    <property type="molecule type" value="Genomic_DNA"/>
</dbReference>
<dbReference type="RefSeq" id="WP_011173437.1">
    <property type="nucleotide sequence ID" value="NC_005835.1"/>
</dbReference>
<dbReference type="SMR" id="Q72IW3"/>
<dbReference type="KEGG" id="tth:TT_C1018"/>
<dbReference type="eggNOG" id="COG0082">
    <property type="taxonomic scope" value="Bacteria"/>
</dbReference>
<dbReference type="HOGENOM" id="CLU_034547_2_0_0"/>
<dbReference type="OrthoDB" id="9771806at2"/>
<dbReference type="UniPathway" id="UPA00053">
    <property type="reaction ID" value="UER00090"/>
</dbReference>
<dbReference type="Proteomes" id="UP000000592">
    <property type="component" value="Chromosome"/>
</dbReference>
<dbReference type="GO" id="GO:0005829">
    <property type="term" value="C:cytosol"/>
    <property type="evidence" value="ECO:0007669"/>
    <property type="project" value="TreeGrafter"/>
</dbReference>
<dbReference type="GO" id="GO:0004107">
    <property type="term" value="F:chorismate synthase activity"/>
    <property type="evidence" value="ECO:0007669"/>
    <property type="project" value="UniProtKB-UniRule"/>
</dbReference>
<dbReference type="GO" id="GO:0010181">
    <property type="term" value="F:FMN binding"/>
    <property type="evidence" value="ECO:0007669"/>
    <property type="project" value="TreeGrafter"/>
</dbReference>
<dbReference type="GO" id="GO:0008652">
    <property type="term" value="P:amino acid biosynthetic process"/>
    <property type="evidence" value="ECO:0007669"/>
    <property type="project" value="UniProtKB-KW"/>
</dbReference>
<dbReference type="GO" id="GO:0009073">
    <property type="term" value="P:aromatic amino acid family biosynthetic process"/>
    <property type="evidence" value="ECO:0007669"/>
    <property type="project" value="UniProtKB-KW"/>
</dbReference>
<dbReference type="GO" id="GO:0009423">
    <property type="term" value="P:chorismate biosynthetic process"/>
    <property type="evidence" value="ECO:0007669"/>
    <property type="project" value="UniProtKB-UniRule"/>
</dbReference>
<dbReference type="CDD" id="cd07304">
    <property type="entry name" value="Chorismate_synthase"/>
    <property type="match status" value="1"/>
</dbReference>
<dbReference type="FunFam" id="3.60.150.10:FF:000002">
    <property type="entry name" value="Chorismate synthase"/>
    <property type="match status" value="1"/>
</dbReference>
<dbReference type="Gene3D" id="3.60.150.10">
    <property type="entry name" value="Chorismate synthase AroC"/>
    <property type="match status" value="1"/>
</dbReference>
<dbReference type="HAMAP" id="MF_00300">
    <property type="entry name" value="Chorismate_synth"/>
    <property type="match status" value="1"/>
</dbReference>
<dbReference type="InterPro" id="IPR000453">
    <property type="entry name" value="Chorismate_synth"/>
</dbReference>
<dbReference type="InterPro" id="IPR035904">
    <property type="entry name" value="Chorismate_synth_AroC_sf"/>
</dbReference>
<dbReference type="InterPro" id="IPR020541">
    <property type="entry name" value="Chorismate_synthase_CS"/>
</dbReference>
<dbReference type="NCBIfam" id="TIGR00033">
    <property type="entry name" value="aroC"/>
    <property type="match status" value="1"/>
</dbReference>
<dbReference type="NCBIfam" id="NF003793">
    <property type="entry name" value="PRK05382.1"/>
    <property type="match status" value="1"/>
</dbReference>
<dbReference type="PANTHER" id="PTHR21085">
    <property type="entry name" value="CHORISMATE SYNTHASE"/>
    <property type="match status" value="1"/>
</dbReference>
<dbReference type="PANTHER" id="PTHR21085:SF0">
    <property type="entry name" value="CHORISMATE SYNTHASE"/>
    <property type="match status" value="1"/>
</dbReference>
<dbReference type="Pfam" id="PF01264">
    <property type="entry name" value="Chorismate_synt"/>
    <property type="match status" value="1"/>
</dbReference>
<dbReference type="PIRSF" id="PIRSF001456">
    <property type="entry name" value="Chorismate_synth"/>
    <property type="match status" value="1"/>
</dbReference>
<dbReference type="SUPFAM" id="SSF103263">
    <property type="entry name" value="Chorismate synthase, AroC"/>
    <property type="match status" value="1"/>
</dbReference>
<dbReference type="PROSITE" id="PS00787">
    <property type="entry name" value="CHORISMATE_SYNTHASE_1"/>
    <property type="match status" value="1"/>
</dbReference>
<dbReference type="PROSITE" id="PS00788">
    <property type="entry name" value="CHORISMATE_SYNTHASE_2"/>
    <property type="match status" value="1"/>
</dbReference>
<accession>Q72IW3</accession>
<organism>
    <name type="scientific">Thermus thermophilus (strain ATCC BAA-163 / DSM 7039 / HB27)</name>
    <dbReference type="NCBI Taxonomy" id="262724"/>
    <lineage>
        <taxon>Bacteria</taxon>
        <taxon>Thermotogati</taxon>
        <taxon>Deinococcota</taxon>
        <taxon>Deinococci</taxon>
        <taxon>Thermales</taxon>
        <taxon>Thermaceae</taxon>
        <taxon>Thermus</taxon>
    </lineage>
</organism>
<proteinExistence type="inferred from homology"/>
<keyword id="KW-0028">Amino-acid biosynthesis</keyword>
<keyword id="KW-0057">Aromatic amino acid biosynthesis</keyword>
<keyword id="KW-0274">FAD</keyword>
<keyword id="KW-0285">Flavoprotein</keyword>
<keyword id="KW-0288">FMN</keyword>
<keyword id="KW-0456">Lyase</keyword>
<keyword id="KW-0521">NADP</keyword>
<name>AROC_THET2</name>
<sequence length="383" mass="41823">MRFLTAGESHGPELLAIIEGLPAGLPLSEEDINPWLEKRQKGYGRGRRMVIERDRVEFRAGVRGGRTTGAPVALAIKNADFKNWAEIMDPAPGNWPRKRALTAARPGHADLAGGMKYGHKDLRDVLERASARETAMRVAVGAVALKLLSLLGVEGVGYVPGMAGVWAKVPFSWDLVPRIEESPLRMTDPEAEAEAIRRIDQAKAEGDTLGGIIEARFRGLVPGLGSHVHWDRKLDGRLAQMALSIPAVKGVEIGPAFENAMKRGSEVHDAIYWSPERGFYRETNRAGGLEGGMTTGEELVVRAALKPIATLMKPLPTVDVVTHEPKDAARERSDTTAVPAASVILCALSAIVLAQAYLEKFGGDTMEEIQERVERYRERVRAY</sequence>
<comment type="function">
    <text evidence="1">Catalyzes the anti-1,4-elimination of the C-3 phosphate and the C-6 proR hydrogen from 5-enolpyruvylshikimate-3-phosphate (EPSP) to yield chorismate, which is the branch point compound that serves as the starting substrate for the three terminal pathways of aromatic amino acid biosynthesis. This reaction introduces a second double bond into the aromatic ring system.</text>
</comment>
<comment type="catalytic activity">
    <reaction evidence="1">
        <text>5-O-(1-carboxyvinyl)-3-phosphoshikimate = chorismate + phosphate</text>
        <dbReference type="Rhea" id="RHEA:21020"/>
        <dbReference type="ChEBI" id="CHEBI:29748"/>
        <dbReference type="ChEBI" id="CHEBI:43474"/>
        <dbReference type="ChEBI" id="CHEBI:57701"/>
        <dbReference type="EC" id="4.2.3.5"/>
    </reaction>
</comment>
<comment type="cofactor">
    <cofactor evidence="1">
        <name>FMNH2</name>
        <dbReference type="ChEBI" id="CHEBI:57618"/>
    </cofactor>
    <text evidence="1">Reduced FMN (FMNH(2)).</text>
</comment>
<comment type="pathway">
    <text evidence="1">Metabolic intermediate biosynthesis; chorismate biosynthesis; chorismate from D-erythrose 4-phosphate and phosphoenolpyruvate: step 7/7.</text>
</comment>
<comment type="subunit">
    <text evidence="1">Homotetramer.</text>
</comment>
<comment type="similarity">
    <text evidence="1">Belongs to the chorismate synthase family.</text>
</comment>
<feature type="chain" id="PRO_0000140669" description="Chorismate synthase">
    <location>
        <begin position="1"/>
        <end position="383"/>
    </location>
</feature>
<feature type="binding site" evidence="1">
    <location>
        <position position="39"/>
    </location>
    <ligand>
        <name>NADP(+)</name>
        <dbReference type="ChEBI" id="CHEBI:58349"/>
    </ligand>
</feature>
<feature type="binding site" evidence="1">
    <location>
        <position position="45"/>
    </location>
    <ligand>
        <name>NADP(+)</name>
        <dbReference type="ChEBI" id="CHEBI:58349"/>
    </ligand>
</feature>
<feature type="binding site" evidence="1">
    <location>
        <begin position="128"/>
        <end position="130"/>
    </location>
    <ligand>
        <name>FMN</name>
        <dbReference type="ChEBI" id="CHEBI:58210"/>
    </ligand>
</feature>
<feature type="binding site" evidence="1">
    <location>
        <position position="291"/>
    </location>
    <ligand>
        <name>FMN</name>
        <dbReference type="ChEBI" id="CHEBI:58210"/>
    </ligand>
</feature>
<feature type="binding site" evidence="1">
    <location>
        <begin position="306"/>
        <end position="310"/>
    </location>
    <ligand>
        <name>FMN</name>
        <dbReference type="ChEBI" id="CHEBI:58210"/>
    </ligand>
</feature>
<feature type="binding site" evidence="1">
    <location>
        <position position="332"/>
    </location>
    <ligand>
        <name>FMN</name>
        <dbReference type="ChEBI" id="CHEBI:58210"/>
    </ligand>
</feature>
<protein>
    <recommendedName>
        <fullName evidence="1">Chorismate synthase</fullName>
        <shortName evidence="1">CS</shortName>
        <ecNumber evidence="1">4.2.3.5</ecNumber>
    </recommendedName>
    <alternativeName>
        <fullName evidence="1">5-enolpyruvylshikimate-3-phosphate phospholyase</fullName>
    </alternativeName>
</protein>
<reference key="1">
    <citation type="journal article" date="2004" name="Nat. Biotechnol.">
        <title>The genome sequence of the extreme thermophile Thermus thermophilus.</title>
        <authorList>
            <person name="Henne A."/>
            <person name="Brueggemann H."/>
            <person name="Raasch C."/>
            <person name="Wiezer A."/>
            <person name="Hartsch T."/>
            <person name="Liesegang H."/>
            <person name="Johann A."/>
            <person name="Lienard T."/>
            <person name="Gohl O."/>
            <person name="Martinez-Arias R."/>
            <person name="Jacobi C."/>
            <person name="Starkuviene V."/>
            <person name="Schlenczeck S."/>
            <person name="Dencker S."/>
            <person name="Huber R."/>
            <person name="Klenk H.-P."/>
            <person name="Kramer W."/>
            <person name="Merkl R."/>
            <person name="Gottschalk G."/>
            <person name="Fritz H.-J."/>
        </authorList>
    </citation>
    <scope>NUCLEOTIDE SEQUENCE [LARGE SCALE GENOMIC DNA]</scope>
    <source>
        <strain>ATCC BAA-163 / DSM 7039 / HB27</strain>
    </source>
</reference>
<evidence type="ECO:0000255" key="1">
    <source>
        <dbReference type="HAMAP-Rule" id="MF_00300"/>
    </source>
</evidence>
<gene>
    <name evidence="1" type="primary">aroC</name>
    <name type="ordered locus">TT_C1018</name>
</gene>